<comment type="function">
    <text evidence="1">Component of the mitochondrial ribosome (mitoribosome), a dedicated translation machinery responsible for the synthesis of mitochondrial genome-encoded proteins, including at least some of the essential transmembrane subunits of the mitochondrial respiratory chain. The mitoribosomes are attached to the mitochondrial inner membrane and translation products are cotranslationally integrated into the membrane.</text>
</comment>
<comment type="subunit">
    <text evidence="1">Component of the mitochondrial large ribosomal subunit (mt-LSU). Mature yeast 74S mitochondrial ribosomes consist of a small (37S) and a large (54S) subunit. The 37S small subunit contains a 15S ribosomal RNA (15S mt-rRNA) and at least 32 different proteins. The 54S large subunit contains a 21S rRNA (21S mt-rRNA) and at least 45 different proteins.</text>
</comment>
<comment type="subcellular location">
    <subcellularLocation>
        <location evidence="2">Mitochondrion</location>
    </subcellularLocation>
</comment>
<comment type="similarity">
    <text evidence="3">Belongs to the universal ribosomal protein uL30 family.</text>
</comment>
<name>RM33_SCHPO</name>
<proteinExistence type="inferred from homology"/>
<evidence type="ECO:0000250" key="1">
    <source>
        <dbReference type="UniProtKB" id="P20084"/>
    </source>
</evidence>
<evidence type="ECO:0000269" key="2">
    <source>
    </source>
</evidence>
<evidence type="ECO:0000305" key="3"/>
<reference key="1">
    <citation type="journal article" date="2002" name="Nature">
        <title>The genome sequence of Schizosaccharomyces pombe.</title>
        <authorList>
            <person name="Wood V."/>
            <person name="Gwilliam R."/>
            <person name="Rajandream M.A."/>
            <person name="Lyne M.H."/>
            <person name="Lyne R."/>
            <person name="Stewart A."/>
            <person name="Sgouros J.G."/>
            <person name="Peat N."/>
            <person name="Hayles J."/>
            <person name="Baker S.G."/>
            <person name="Basham D."/>
            <person name="Bowman S."/>
            <person name="Brooks K."/>
            <person name="Brown D."/>
            <person name="Brown S."/>
            <person name="Chillingworth T."/>
            <person name="Churcher C.M."/>
            <person name="Collins M."/>
            <person name="Connor R."/>
            <person name="Cronin A."/>
            <person name="Davis P."/>
            <person name="Feltwell T."/>
            <person name="Fraser A."/>
            <person name="Gentles S."/>
            <person name="Goble A."/>
            <person name="Hamlin N."/>
            <person name="Harris D.E."/>
            <person name="Hidalgo J."/>
            <person name="Hodgson G."/>
            <person name="Holroyd S."/>
            <person name="Hornsby T."/>
            <person name="Howarth S."/>
            <person name="Huckle E.J."/>
            <person name="Hunt S."/>
            <person name="Jagels K."/>
            <person name="James K.D."/>
            <person name="Jones L."/>
            <person name="Jones M."/>
            <person name="Leather S."/>
            <person name="McDonald S."/>
            <person name="McLean J."/>
            <person name="Mooney P."/>
            <person name="Moule S."/>
            <person name="Mungall K.L."/>
            <person name="Murphy L.D."/>
            <person name="Niblett D."/>
            <person name="Odell C."/>
            <person name="Oliver K."/>
            <person name="O'Neil S."/>
            <person name="Pearson D."/>
            <person name="Quail M.A."/>
            <person name="Rabbinowitsch E."/>
            <person name="Rutherford K.M."/>
            <person name="Rutter S."/>
            <person name="Saunders D."/>
            <person name="Seeger K."/>
            <person name="Sharp S."/>
            <person name="Skelton J."/>
            <person name="Simmonds M.N."/>
            <person name="Squares R."/>
            <person name="Squares S."/>
            <person name="Stevens K."/>
            <person name="Taylor K."/>
            <person name="Taylor R.G."/>
            <person name="Tivey A."/>
            <person name="Walsh S.V."/>
            <person name="Warren T."/>
            <person name="Whitehead S."/>
            <person name="Woodward J.R."/>
            <person name="Volckaert G."/>
            <person name="Aert R."/>
            <person name="Robben J."/>
            <person name="Grymonprez B."/>
            <person name="Weltjens I."/>
            <person name="Vanstreels E."/>
            <person name="Rieger M."/>
            <person name="Schaefer M."/>
            <person name="Mueller-Auer S."/>
            <person name="Gabel C."/>
            <person name="Fuchs M."/>
            <person name="Duesterhoeft A."/>
            <person name="Fritzc C."/>
            <person name="Holzer E."/>
            <person name="Moestl D."/>
            <person name="Hilbert H."/>
            <person name="Borzym K."/>
            <person name="Langer I."/>
            <person name="Beck A."/>
            <person name="Lehrach H."/>
            <person name="Reinhardt R."/>
            <person name="Pohl T.M."/>
            <person name="Eger P."/>
            <person name="Zimmermann W."/>
            <person name="Wedler H."/>
            <person name="Wambutt R."/>
            <person name="Purnelle B."/>
            <person name="Goffeau A."/>
            <person name="Cadieu E."/>
            <person name="Dreano S."/>
            <person name="Gloux S."/>
            <person name="Lelaure V."/>
            <person name="Mottier S."/>
            <person name="Galibert F."/>
            <person name="Aves S.J."/>
            <person name="Xiang Z."/>
            <person name="Hunt C."/>
            <person name="Moore K."/>
            <person name="Hurst S.M."/>
            <person name="Lucas M."/>
            <person name="Rochet M."/>
            <person name="Gaillardin C."/>
            <person name="Tallada V.A."/>
            <person name="Garzon A."/>
            <person name="Thode G."/>
            <person name="Daga R.R."/>
            <person name="Cruzado L."/>
            <person name="Jimenez J."/>
            <person name="Sanchez M."/>
            <person name="del Rey F."/>
            <person name="Benito J."/>
            <person name="Dominguez A."/>
            <person name="Revuelta J.L."/>
            <person name="Moreno S."/>
            <person name="Armstrong J."/>
            <person name="Forsburg S.L."/>
            <person name="Cerutti L."/>
            <person name="Lowe T."/>
            <person name="McCombie W.R."/>
            <person name="Paulsen I."/>
            <person name="Potashkin J."/>
            <person name="Shpakovski G.V."/>
            <person name="Ussery D."/>
            <person name="Barrell B.G."/>
            <person name="Nurse P."/>
        </authorList>
    </citation>
    <scope>NUCLEOTIDE SEQUENCE [LARGE SCALE GENOMIC DNA]</scope>
    <source>
        <strain>972 / ATCC 24843</strain>
    </source>
</reference>
<reference key="2">
    <citation type="submission" date="1998-03" db="EMBL/GenBank/DDBJ databases">
        <title>S.pombe mitochondrial ribosomal protein YmL33 homolog.</title>
        <authorList>
            <person name="Kawamukai M."/>
        </authorList>
    </citation>
    <scope>NUCLEOTIDE SEQUENCE [MRNA] OF 7-97</scope>
</reference>
<reference key="3">
    <citation type="journal article" date="2006" name="Nat. Biotechnol.">
        <title>ORFeome cloning and global analysis of protein localization in the fission yeast Schizosaccharomyces pombe.</title>
        <authorList>
            <person name="Matsuyama A."/>
            <person name="Arai R."/>
            <person name="Yashiroda Y."/>
            <person name="Shirai A."/>
            <person name="Kamata A."/>
            <person name="Sekido S."/>
            <person name="Kobayashi Y."/>
            <person name="Hashimoto A."/>
            <person name="Hamamoto M."/>
            <person name="Hiraoka Y."/>
            <person name="Horinouchi S."/>
            <person name="Yoshida M."/>
        </authorList>
    </citation>
    <scope>SUBCELLULAR LOCATION [LARGE SCALE ANALYSIS]</scope>
</reference>
<dbReference type="EMBL" id="CU329672">
    <property type="protein sequence ID" value="CAA22639.1"/>
    <property type="molecule type" value="Genomic_DNA"/>
</dbReference>
<dbReference type="EMBL" id="AB012388">
    <property type="protein sequence ID" value="BAA25323.1"/>
    <property type="molecule type" value="mRNA"/>
</dbReference>
<dbReference type="PIR" id="T41233">
    <property type="entry name" value="T41233"/>
</dbReference>
<dbReference type="PIR" id="T43345">
    <property type="entry name" value="T43345"/>
</dbReference>
<dbReference type="RefSeq" id="NP_588490.1">
    <property type="nucleotide sequence ID" value="NM_001023480.2"/>
</dbReference>
<dbReference type="SMR" id="O59856"/>
<dbReference type="BioGRID" id="275711">
    <property type="interactions" value="1"/>
</dbReference>
<dbReference type="ComplexPortal" id="CPX-10323">
    <property type="entry name" value="54S mitochondrial large ribosomal subunit"/>
</dbReference>
<dbReference type="FunCoup" id="O59856">
    <property type="interactions" value="367"/>
</dbReference>
<dbReference type="STRING" id="284812.O59856"/>
<dbReference type="PaxDb" id="4896-SPCC1919.08c.1"/>
<dbReference type="EnsemblFungi" id="SPCC1919.08c.1">
    <property type="protein sequence ID" value="SPCC1919.08c.1:pep"/>
    <property type="gene ID" value="SPCC1919.08c"/>
</dbReference>
<dbReference type="GeneID" id="2539139"/>
<dbReference type="KEGG" id="spo:2539139"/>
<dbReference type="PomBase" id="SPCC1919.08c">
    <property type="gene designation" value="mrpl33"/>
</dbReference>
<dbReference type="VEuPathDB" id="FungiDB:SPCC1919.08c"/>
<dbReference type="eggNOG" id="ENOG502S7S3">
    <property type="taxonomic scope" value="Eukaryota"/>
</dbReference>
<dbReference type="HOGENOM" id="CLU_131047_0_2_1"/>
<dbReference type="InParanoid" id="O59856"/>
<dbReference type="OMA" id="AYCEANP"/>
<dbReference type="PhylomeDB" id="O59856"/>
<dbReference type="PRO" id="PR:O59856"/>
<dbReference type="Proteomes" id="UP000002485">
    <property type="component" value="Chromosome III"/>
</dbReference>
<dbReference type="GO" id="GO:0005762">
    <property type="term" value="C:mitochondrial large ribosomal subunit"/>
    <property type="evidence" value="ECO:0000266"/>
    <property type="project" value="PomBase"/>
</dbReference>
<dbReference type="GO" id="GO:0005739">
    <property type="term" value="C:mitochondrion"/>
    <property type="evidence" value="ECO:0007005"/>
    <property type="project" value="PomBase"/>
</dbReference>
<dbReference type="GO" id="GO:0003735">
    <property type="term" value="F:structural constituent of ribosome"/>
    <property type="evidence" value="ECO:0000266"/>
    <property type="project" value="PomBase"/>
</dbReference>
<dbReference type="GO" id="GO:0032543">
    <property type="term" value="P:mitochondrial translation"/>
    <property type="evidence" value="ECO:0000266"/>
    <property type="project" value="PomBase"/>
</dbReference>
<dbReference type="CDD" id="cd00355">
    <property type="entry name" value="Ribosomal_L30_like"/>
    <property type="match status" value="1"/>
</dbReference>
<dbReference type="FunFam" id="3.30.1390.20:FF:000010">
    <property type="entry name" value="Large subunit ribosomal protein L30"/>
    <property type="match status" value="1"/>
</dbReference>
<dbReference type="Gene3D" id="3.30.1390.20">
    <property type="entry name" value="Ribosomal protein L30, ferredoxin-like fold domain"/>
    <property type="match status" value="1"/>
</dbReference>
<dbReference type="InterPro" id="IPR036919">
    <property type="entry name" value="Ribo_uL30_ferredoxin-like_sf"/>
</dbReference>
<dbReference type="InterPro" id="IPR005996">
    <property type="entry name" value="Ribosomal_uL30_bac-type"/>
</dbReference>
<dbReference type="InterPro" id="IPR016082">
    <property type="entry name" value="Ribosomal_uL30_ferredoxin-like"/>
</dbReference>
<dbReference type="PANTHER" id="PTHR15892:SF2">
    <property type="entry name" value="LARGE RIBOSOMAL SUBUNIT PROTEIN UL30M"/>
    <property type="match status" value="1"/>
</dbReference>
<dbReference type="PANTHER" id="PTHR15892">
    <property type="entry name" value="MITOCHONDRIAL RIBOSOMAL PROTEIN L30"/>
    <property type="match status" value="1"/>
</dbReference>
<dbReference type="Pfam" id="PF00327">
    <property type="entry name" value="Ribosomal_L30"/>
    <property type="match status" value="1"/>
</dbReference>
<dbReference type="SUPFAM" id="SSF55129">
    <property type="entry name" value="Ribosomal protein L30p/L7e"/>
    <property type="match status" value="1"/>
</dbReference>
<accession>O59856</accession>
<organism>
    <name type="scientific">Schizosaccharomyces pombe (strain 972 / ATCC 24843)</name>
    <name type="common">Fission yeast</name>
    <dbReference type="NCBI Taxonomy" id="284812"/>
    <lineage>
        <taxon>Eukaryota</taxon>
        <taxon>Fungi</taxon>
        <taxon>Dikarya</taxon>
        <taxon>Ascomycota</taxon>
        <taxon>Taphrinomycotina</taxon>
        <taxon>Schizosaccharomycetes</taxon>
        <taxon>Schizosaccharomycetales</taxon>
        <taxon>Schizosaccharomycetaceae</taxon>
        <taxon>Schizosaccharomyces</taxon>
    </lineage>
</organism>
<gene>
    <name type="primary">mrpl33</name>
    <name type="ORF">SPCC1919.08c</name>
</gene>
<sequence length="97" mass="10897">MSFFRVRLERSAIGLSSKVRSVLHSLRLTKRHSVVYCDVNPINAGRIFKVKELVSVSTVKQKLAAGQEKKSLASSSGFTVIHRYNNGLKELNNMFES</sequence>
<feature type="chain" id="PRO_0000104618" description="Large ribosomal subunit protein uL30m">
    <location>
        <begin position="1"/>
        <end position="97"/>
    </location>
</feature>
<keyword id="KW-0496">Mitochondrion</keyword>
<keyword id="KW-1185">Reference proteome</keyword>
<keyword id="KW-0687">Ribonucleoprotein</keyword>
<keyword id="KW-0689">Ribosomal protein</keyword>
<protein>
    <recommendedName>
        <fullName evidence="3">Large ribosomal subunit protein uL30m</fullName>
    </recommendedName>
    <alternativeName>
        <fullName>Probable 54S ribosomal protein L33, mitochondrial</fullName>
    </alternativeName>
</protein>